<sequence length="284" mass="31118">MTSFQFTKMHGLGNNYIYVNQMKEQLPEEKLSEIAIQVSSIYTGIGSDGMILICPSDVAPVKMRIFNNDGSEGKNCGNGLRCVAKYVYEHQIVTDTTFQIETLSGLVEATVHVQDDHVHLVTVDMGKPRFEKEAMPMLGEPASTTINEPLDFGTTTLNGTAVSMGNPHIVFYLEDIEKAPLDTLGPIIEKHDMFPEGVNVEFVEVVSETELHFRVWERGSGITQACGTGACAAAVSTIVNGQAKKETDMTVHLAGGDLIIRWKDNEHVLMTGPAETICDGTFYL</sequence>
<comment type="function">
    <text evidence="1">Catalyzes the stereoinversion of LL-2,6-diaminopimelate (L,L-DAP) to meso-diaminopimelate (meso-DAP), a precursor of L-lysine and an essential component of the bacterial peptidoglycan.</text>
</comment>
<comment type="catalytic activity">
    <reaction evidence="1">
        <text>(2S,6S)-2,6-diaminopimelate = meso-2,6-diaminopimelate</text>
        <dbReference type="Rhea" id="RHEA:15393"/>
        <dbReference type="ChEBI" id="CHEBI:57609"/>
        <dbReference type="ChEBI" id="CHEBI:57791"/>
        <dbReference type="EC" id="5.1.1.7"/>
    </reaction>
</comment>
<comment type="pathway">
    <text evidence="1">Amino-acid biosynthesis; L-lysine biosynthesis via DAP pathway; DL-2,6-diaminopimelate from LL-2,6-diaminopimelate: step 1/1.</text>
</comment>
<comment type="subunit">
    <text evidence="1">Homodimer.</text>
</comment>
<comment type="subcellular location">
    <subcellularLocation>
        <location evidence="1">Cytoplasm</location>
    </subcellularLocation>
</comment>
<comment type="similarity">
    <text evidence="1">Belongs to the diaminopimelate epimerase family.</text>
</comment>
<reference key="1">
    <citation type="journal article" date="2007" name="PLoS ONE">
        <title>Paradoxical DNA repair and peroxide resistance gene conservation in Bacillus pumilus SAFR-032.</title>
        <authorList>
            <person name="Gioia J."/>
            <person name="Yerrapragada S."/>
            <person name="Qin X."/>
            <person name="Jiang H."/>
            <person name="Igboeli O.C."/>
            <person name="Muzny D."/>
            <person name="Dugan-Rocha S."/>
            <person name="Ding Y."/>
            <person name="Hawes A."/>
            <person name="Liu W."/>
            <person name="Perez L."/>
            <person name="Kovar C."/>
            <person name="Dinh H."/>
            <person name="Lee S."/>
            <person name="Nazareth L."/>
            <person name="Blyth P."/>
            <person name="Holder M."/>
            <person name="Buhay C."/>
            <person name="Tirumalai M.R."/>
            <person name="Liu Y."/>
            <person name="Dasgupta I."/>
            <person name="Bokhetache L."/>
            <person name="Fujita M."/>
            <person name="Karouia F."/>
            <person name="Eswara Moorthy P."/>
            <person name="Siefert J."/>
            <person name="Uzman A."/>
            <person name="Buzumbo P."/>
            <person name="Verma A."/>
            <person name="Zwiya H."/>
            <person name="McWilliams B.D."/>
            <person name="Olowu A."/>
            <person name="Clinkenbeard K.D."/>
            <person name="Newcombe D."/>
            <person name="Golebiewski L."/>
            <person name="Petrosino J.F."/>
            <person name="Nicholson W.L."/>
            <person name="Fox G.E."/>
            <person name="Venkateswaran K."/>
            <person name="Highlander S.K."/>
            <person name="Weinstock G.M."/>
        </authorList>
    </citation>
    <scope>NUCLEOTIDE SEQUENCE [LARGE SCALE GENOMIC DNA]</scope>
    <source>
        <strain>SAFR-032</strain>
    </source>
</reference>
<dbReference type="EC" id="5.1.1.7" evidence="1"/>
<dbReference type="EMBL" id="CP000813">
    <property type="protein sequence ID" value="ABV63532.1"/>
    <property type="molecule type" value="Genomic_DNA"/>
</dbReference>
<dbReference type="RefSeq" id="WP_012011139.1">
    <property type="nucleotide sequence ID" value="NC_009848.4"/>
</dbReference>
<dbReference type="SMR" id="A8FH15"/>
<dbReference type="STRING" id="315750.BPUM_2877"/>
<dbReference type="GeneID" id="5622166"/>
<dbReference type="KEGG" id="bpu:BPUM_2877"/>
<dbReference type="eggNOG" id="COG0253">
    <property type="taxonomic scope" value="Bacteria"/>
</dbReference>
<dbReference type="HOGENOM" id="CLU_053306_3_0_9"/>
<dbReference type="OrthoDB" id="9805408at2"/>
<dbReference type="UniPathway" id="UPA00034">
    <property type="reaction ID" value="UER00025"/>
</dbReference>
<dbReference type="Proteomes" id="UP000001355">
    <property type="component" value="Chromosome"/>
</dbReference>
<dbReference type="GO" id="GO:0005829">
    <property type="term" value="C:cytosol"/>
    <property type="evidence" value="ECO:0007669"/>
    <property type="project" value="TreeGrafter"/>
</dbReference>
<dbReference type="GO" id="GO:0008837">
    <property type="term" value="F:diaminopimelate epimerase activity"/>
    <property type="evidence" value="ECO:0007669"/>
    <property type="project" value="UniProtKB-UniRule"/>
</dbReference>
<dbReference type="GO" id="GO:0009089">
    <property type="term" value="P:lysine biosynthetic process via diaminopimelate"/>
    <property type="evidence" value="ECO:0007669"/>
    <property type="project" value="UniProtKB-UniRule"/>
</dbReference>
<dbReference type="FunFam" id="3.10.310.10:FF:000004">
    <property type="entry name" value="Diaminopimelate epimerase"/>
    <property type="match status" value="1"/>
</dbReference>
<dbReference type="FunFam" id="3.10.310.10:FF:000006">
    <property type="entry name" value="Diaminopimelate epimerase"/>
    <property type="match status" value="1"/>
</dbReference>
<dbReference type="Gene3D" id="3.10.310.10">
    <property type="entry name" value="Diaminopimelate Epimerase, Chain A, domain 1"/>
    <property type="match status" value="2"/>
</dbReference>
<dbReference type="HAMAP" id="MF_00197">
    <property type="entry name" value="DAP_epimerase"/>
    <property type="match status" value="1"/>
</dbReference>
<dbReference type="InterPro" id="IPR018510">
    <property type="entry name" value="DAP_epimerase_AS"/>
</dbReference>
<dbReference type="InterPro" id="IPR001653">
    <property type="entry name" value="DAP_epimerase_DapF"/>
</dbReference>
<dbReference type="NCBIfam" id="TIGR00652">
    <property type="entry name" value="DapF"/>
    <property type="match status" value="1"/>
</dbReference>
<dbReference type="PANTHER" id="PTHR31689:SF0">
    <property type="entry name" value="DIAMINOPIMELATE EPIMERASE"/>
    <property type="match status" value="1"/>
</dbReference>
<dbReference type="PANTHER" id="PTHR31689">
    <property type="entry name" value="DIAMINOPIMELATE EPIMERASE, CHLOROPLASTIC"/>
    <property type="match status" value="1"/>
</dbReference>
<dbReference type="Pfam" id="PF01678">
    <property type="entry name" value="DAP_epimerase"/>
    <property type="match status" value="2"/>
</dbReference>
<dbReference type="SUPFAM" id="SSF54506">
    <property type="entry name" value="Diaminopimelate epimerase-like"/>
    <property type="match status" value="1"/>
</dbReference>
<dbReference type="PROSITE" id="PS01326">
    <property type="entry name" value="DAP_EPIMERASE"/>
    <property type="match status" value="1"/>
</dbReference>
<evidence type="ECO:0000255" key="1">
    <source>
        <dbReference type="HAMAP-Rule" id="MF_00197"/>
    </source>
</evidence>
<proteinExistence type="inferred from homology"/>
<accession>A8FH15</accession>
<name>DAPF_BACP2</name>
<protein>
    <recommendedName>
        <fullName evidence="1">Diaminopimelate epimerase</fullName>
        <shortName evidence="1">DAP epimerase</shortName>
        <ecNumber evidence="1">5.1.1.7</ecNumber>
    </recommendedName>
    <alternativeName>
        <fullName evidence="1">PLP-independent amino acid racemase</fullName>
    </alternativeName>
</protein>
<keyword id="KW-0028">Amino-acid biosynthesis</keyword>
<keyword id="KW-0963">Cytoplasm</keyword>
<keyword id="KW-0413">Isomerase</keyword>
<keyword id="KW-0457">Lysine biosynthesis</keyword>
<organism>
    <name type="scientific">Bacillus pumilus (strain SAFR-032)</name>
    <dbReference type="NCBI Taxonomy" id="315750"/>
    <lineage>
        <taxon>Bacteria</taxon>
        <taxon>Bacillati</taxon>
        <taxon>Bacillota</taxon>
        <taxon>Bacilli</taxon>
        <taxon>Bacillales</taxon>
        <taxon>Bacillaceae</taxon>
        <taxon>Bacillus</taxon>
    </lineage>
</organism>
<feature type="chain" id="PRO_1000058537" description="Diaminopimelate epimerase">
    <location>
        <begin position="1"/>
        <end position="284"/>
    </location>
</feature>
<feature type="active site" description="Proton donor" evidence="1">
    <location>
        <position position="76"/>
    </location>
</feature>
<feature type="active site" description="Proton acceptor" evidence="1">
    <location>
        <position position="226"/>
    </location>
</feature>
<feature type="binding site" evidence="1">
    <location>
        <position position="14"/>
    </location>
    <ligand>
        <name>substrate</name>
    </ligand>
</feature>
<feature type="binding site" evidence="1">
    <location>
        <position position="67"/>
    </location>
    <ligand>
        <name>substrate</name>
    </ligand>
</feature>
<feature type="binding site" evidence="1">
    <location>
        <begin position="77"/>
        <end position="78"/>
    </location>
    <ligand>
        <name>substrate</name>
    </ligand>
</feature>
<feature type="binding site" evidence="1">
    <location>
        <position position="166"/>
    </location>
    <ligand>
        <name>substrate</name>
    </ligand>
</feature>
<feature type="binding site" evidence="1">
    <location>
        <position position="199"/>
    </location>
    <ligand>
        <name>substrate</name>
    </ligand>
</feature>
<feature type="binding site" evidence="1">
    <location>
        <begin position="217"/>
        <end position="218"/>
    </location>
    <ligand>
        <name>substrate</name>
    </ligand>
</feature>
<feature type="binding site" evidence="1">
    <location>
        <begin position="227"/>
        <end position="228"/>
    </location>
    <ligand>
        <name>substrate</name>
    </ligand>
</feature>
<feature type="site" description="Could be important to modulate the pK values of the two catalytic cysteine residues" evidence="1">
    <location>
        <position position="168"/>
    </location>
</feature>
<feature type="site" description="Could be important to modulate the pK values of the two catalytic cysteine residues" evidence="1">
    <location>
        <position position="217"/>
    </location>
</feature>
<gene>
    <name evidence="1" type="primary">dapF</name>
    <name type="ordered locus">BPUM_2877</name>
</gene>